<dbReference type="EC" id="3.6.4.13"/>
<dbReference type="EMBL" id="AAFI02000100">
    <property type="protein sequence ID" value="EAL63748.1"/>
    <property type="molecule type" value="Genomic_DNA"/>
</dbReference>
<dbReference type="RefSeq" id="XP_637262.1">
    <property type="nucleotide sequence ID" value="XM_632170.1"/>
</dbReference>
<dbReference type="SMR" id="Q54KG1"/>
<dbReference type="FunCoup" id="Q54KG1">
    <property type="interactions" value="625"/>
</dbReference>
<dbReference type="IntAct" id="Q54KG1">
    <property type="interactions" value="1"/>
</dbReference>
<dbReference type="STRING" id="44689.Q54KG1"/>
<dbReference type="PaxDb" id="44689-DDB0233452"/>
<dbReference type="EnsemblProtists" id="EAL63748">
    <property type="protein sequence ID" value="EAL63748"/>
    <property type="gene ID" value="DDB_G0287361"/>
</dbReference>
<dbReference type="GeneID" id="8626092"/>
<dbReference type="KEGG" id="ddi:DDB_G0287361"/>
<dbReference type="dictyBase" id="DDB_G0287361">
    <property type="gene designation" value="ddx41"/>
</dbReference>
<dbReference type="VEuPathDB" id="AmoebaDB:DDB_G0287361"/>
<dbReference type="eggNOG" id="KOG0341">
    <property type="taxonomic scope" value="Eukaryota"/>
</dbReference>
<dbReference type="HOGENOM" id="CLU_003041_16_5_1"/>
<dbReference type="InParanoid" id="Q54KG1"/>
<dbReference type="OMA" id="FKTIWTL"/>
<dbReference type="PhylomeDB" id="Q54KG1"/>
<dbReference type="Reactome" id="R-DDI-1834941">
    <property type="pathway name" value="STING mediated induction of host immune responses"/>
</dbReference>
<dbReference type="Reactome" id="R-DDI-72163">
    <property type="pathway name" value="mRNA Splicing - Major Pathway"/>
</dbReference>
<dbReference type="PRO" id="PR:Q54KG1"/>
<dbReference type="Proteomes" id="UP000002195">
    <property type="component" value="Chromosome 5"/>
</dbReference>
<dbReference type="GO" id="GO:0005681">
    <property type="term" value="C:spliceosomal complex"/>
    <property type="evidence" value="ECO:0000318"/>
    <property type="project" value="GO_Central"/>
</dbReference>
<dbReference type="GO" id="GO:0005524">
    <property type="term" value="F:ATP binding"/>
    <property type="evidence" value="ECO:0007669"/>
    <property type="project" value="UniProtKB-KW"/>
</dbReference>
<dbReference type="GO" id="GO:0016887">
    <property type="term" value="F:ATP hydrolysis activity"/>
    <property type="evidence" value="ECO:0007669"/>
    <property type="project" value="RHEA"/>
</dbReference>
<dbReference type="GO" id="GO:0003729">
    <property type="term" value="F:mRNA binding"/>
    <property type="evidence" value="ECO:0000318"/>
    <property type="project" value="GO_Central"/>
</dbReference>
<dbReference type="GO" id="GO:0003724">
    <property type="term" value="F:RNA helicase activity"/>
    <property type="evidence" value="ECO:0000318"/>
    <property type="project" value="GO_Central"/>
</dbReference>
<dbReference type="GO" id="GO:0008270">
    <property type="term" value="F:zinc ion binding"/>
    <property type="evidence" value="ECO:0007669"/>
    <property type="project" value="UniProtKB-KW"/>
</dbReference>
<dbReference type="GO" id="GO:0000398">
    <property type="term" value="P:mRNA splicing, via spliceosome"/>
    <property type="evidence" value="ECO:0000318"/>
    <property type="project" value="GO_Central"/>
</dbReference>
<dbReference type="CDD" id="cd17951">
    <property type="entry name" value="DEADc_DDX41"/>
    <property type="match status" value="1"/>
</dbReference>
<dbReference type="CDD" id="cd18787">
    <property type="entry name" value="SF2_C_DEAD"/>
    <property type="match status" value="1"/>
</dbReference>
<dbReference type="FunFam" id="3.40.50.300:FF:000449">
    <property type="entry name" value="Probable ATP-dependent RNA helicase DDX41"/>
    <property type="match status" value="1"/>
</dbReference>
<dbReference type="FunFam" id="3.40.50.300:FF:000657">
    <property type="entry name" value="Probable ATP-dependent RNA helicase DDX41"/>
    <property type="match status" value="1"/>
</dbReference>
<dbReference type="Gene3D" id="3.40.50.300">
    <property type="entry name" value="P-loop containing nucleotide triphosphate hydrolases"/>
    <property type="match status" value="2"/>
</dbReference>
<dbReference type="InterPro" id="IPR011545">
    <property type="entry name" value="DEAD/DEAH_box_helicase_dom"/>
</dbReference>
<dbReference type="InterPro" id="IPR044113">
    <property type="entry name" value="DEADc_DDX41"/>
</dbReference>
<dbReference type="InterPro" id="IPR014001">
    <property type="entry name" value="Helicase_ATP-bd"/>
</dbReference>
<dbReference type="InterPro" id="IPR001650">
    <property type="entry name" value="Helicase_C-like"/>
</dbReference>
<dbReference type="InterPro" id="IPR027417">
    <property type="entry name" value="P-loop_NTPase"/>
</dbReference>
<dbReference type="InterPro" id="IPR014014">
    <property type="entry name" value="RNA_helicase_DEAD_Q_motif"/>
</dbReference>
<dbReference type="PANTHER" id="PTHR47958">
    <property type="entry name" value="ATP-DEPENDENT RNA HELICASE DBP3"/>
    <property type="match status" value="1"/>
</dbReference>
<dbReference type="Pfam" id="PF00270">
    <property type="entry name" value="DEAD"/>
    <property type="match status" value="1"/>
</dbReference>
<dbReference type="Pfam" id="PF00271">
    <property type="entry name" value="Helicase_C"/>
    <property type="match status" value="1"/>
</dbReference>
<dbReference type="SMART" id="SM00487">
    <property type="entry name" value="DEXDc"/>
    <property type="match status" value="1"/>
</dbReference>
<dbReference type="SMART" id="SM00490">
    <property type="entry name" value="HELICc"/>
    <property type="match status" value="1"/>
</dbReference>
<dbReference type="SUPFAM" id="SSF52540">
    <property type="entry name" value="P-loop containing nucleoside triphosphate hydrolases"/>
    <property type="match status" value="1"/>
</dbReference>
<dbReference type="PROSITE" id="PS51192">
    <property type="entry name" value="HELICASE_ATP_BIND_1"/>
    <property type="match status" value="1"/>
</dbReference>
<dbReference type="PROSITE" id="PS51194">
    <property type="entry name" value="HELICASE_CTER"/>
    <property type="match status" value="1"/>
</dbReference>
<dbReference type="PROSITE" id="PS51195">
    <property type="entry name" value="Q_MOTIF"/>
    <property type="match status" value="1"/>
</dbReference>
<accession>Q54KG1</accession>
<keyword id="KW-0067">ATP-binding</keyword>
<keyword id="KW-0175">Coiled coil</keyword>
<keyword id="KW-0347">Helicase</keyword>
<keyword id="KW-0378">Hydrolase</keyword>
<keyword id="KW-0479">Metal-binding</keyword>
<keyword id="KW-0547">Nucleotide-binding</keyword>
<keyword id="KW-0539">Nucleus</keyword>
<keyword id="KW-1185">Reference proteome</keyword>
<keyword id="KW-0694">RNA-binding</keyword>
<keyword id="KW-0862">Zinc</keyword>
<keyword id="KW-0863">Zinc-finger</keyword>
<sequence length="671" mass="76076">MSEESRKHDIEEQHIEKWIPLKERKLNQIKSKLNNLKQQQPQQHSQQQENEQNNATATNTNITNTTTTTTTTTTTTTSSNNDNNFEDEKKPIYQQSQSLLDQKFEMIKKQENKTQRELQQGGTIIENDVNSSNNNNNNGEENKIKEEKRLDMEESDILKSLKTFKPLVSVKDRAKDVIYTDSIKTNWRAPRYILERDEKDHQKVRDQLNIITDGEDIPPPITTFKEMKIPKPVIDVLLEKGIKKPSPIQVQGLPVILSGRDMIGIAYTGSGKTLVFTLPMVLFALEEECKLPIIQGEGPFGLILCPSRELARQTYDLVNSFTNALHKNGGHPQLRTLLAIGGIDLREQEHIFKKGVHMIIATPGRLLDLLNKKKINFKLCKYLGLDEADRLIDLGFEDDIRSVLDNFTNQRQTLLFSATMPKKIQEFARSALVLPVEVNVGRAGAANLNVTQEVEFVKPEAKIVYLLECLQKTPPPVLIFCENKKDVDDIYEYLLLKQVEAVSIHGDKSQDERESAIKAFREGKKDVLVATDVASKGLDFPEIQHVINFDMPREIENYIHRIGRTGRRGNKGVATTFINKNNTESLLLDLKYLLIEAKQKVPPALLEIPDDNQYLQKLQDRNGNTGGGADDDDTKPCEYCDGRGHRLVNCPKLKKQAGPKRDFFGSGGGDW</sequence>
<reference key="1">
    <citation type="journal article" date="2005" name="Nature">
        <title>The genome of the social amoeba Dictyostelium discoideum.</title>
        <authorList>
            <person name="Eichinger L."/>
            <person name="Pachebat J.A."/>
            <person name="Gloeckner G."/>
            <person name="Rajandream M.A."/>
            <person name="Sucgang R."/>
            <person name="Berriman M."/>
            <person name="Song J."/>
            <person name="Olsen R."/>
            <person name="Szafranski K."/>
            <person name="Xu Q."/>
            <person name="Tunggal B."/>
            <person name="Kummerfeld S."/>
            <person name="Madera M."/>
            <person name="Konfortov B.A."/>
            <person name="Rivero F."/>
            <person name="Bankier A.T."/>
            <person name="Lehmann R."/>
            <person name="Hamlin N."/>
            <person name="Davies R."/>
            <person name="Gaudet P."/>
            <person name="Fey P."/>
            <person name="Pilcher K."/>
            <person name="Chen G."/>
            <person name="Saunders D."/>
            <person name="Sodergren E.J."/>
            <person name="Davis P."/>
            <person name="Kerhornou A."/>
            <person name="Nie X."/>
            <person name="Hall N."/>
            <person name="Anjard C."/>
            <person name="Hemphill L."/>
            <person name="Bason N."/>
            <person name="Farbrother P."/>
            <person name="Desany B."/>
            <person name="Just E."/>
            <person name="Morio T."/>
            <person name="Rost R."/>
            <person name="Churcher C.M."/>
            <person name="Cooper J."/>
            <person name="Haydock S."/>
            <person name="van Driessche N."/>
            <person name="Cronin A."/>
            <person name="Goodhead I."/>
            <person name="Muzny D.M."/>
            <person name="Mourier T."/>
            <person name="Pain A."/>
            <person name="Lu M."/>
            <person name="Harper D."/>
            <person name="Lindsay R."/>
            <person name="Hauser H."/>
            <person name="James K.D."/>
            <person name="Quiles M."/>
            <person name="Madan Babu M."/>
            <person name="Saito T."/>
            <person name="Buchrieser C."/>
            <person name="Wardroper A."/>
            <person name="Felder M."/>
            <person name="Thangavelu M."/>
            <person name="Johnson D."/>
            <person name="Knights A."/>
            <person name="Loulseged H."/>
            <person name="Mungall K.L."/>
            <person name="Oliver K."/>
            <person name="Price C."/>
            <person name="Quail M.A."/>
            <person name="Urushihara H."/>
            <person name="Hernandez J."/>
            <person name="Rabbinowitsch E."/>
            <person name="Steffen D."/>
            <person name="Sanders M."/>
            <person name="Ma J."/>
            <person name="Kohara Y."/>
            <person name="Sharp S."/>
            <person name="Simmonds M.N."/>
            <person name="Spiegler S."/>
            <person name="Tivey A."/>
            <person name="Sugano S."/>
            <person name="White B."/>
            <person name="Walker D."/>
            <person name="Woodward J.R."/>
            <person name="Winckler T."/>
            <person name="Tanaka Y."/>
            <person name="Shaulsky G."/>
            <person name="Schleicher M."/>
            <person name="Weinstock G.M."/>
            <person name="Rosenthal A."/>
            <person name="Cox E.C."/>
            <person name="Chisholm R.L."/>
            <person name="Gibbs R.A."/>
            <person name="Loomis W.F."/>
            <person name="Platzer M."/>
            <person name="Kay R.R."/>
            <person name="Williams J.G."/>
            <person name="Dear P.H."/>
            <person name="Noegel A.A."/>
            <person name="Barrell B.G."/>
            <person name="Kuspa A."/>
        </authorList>
    </citation>
    <scope>NUCLEOTIDE SEQUENCE [LARGE SCALE GENOMIC DNA]</scope>
    <source>
        <strain>AX4</strain>
    </source>
</reference>
<reference key="2">
    <citation type="journal article" date="2006" name="J. Proteome Res.">
        <title>Identification of novel centrosomal proteins in Dictyostelium discoideum by comparative proteomic approaches.</title>
        <authorList>
            <person name="Reinders Y."/>
            <person name="Schulz I."/>
            <person name="Graef R."/>
            <person name="Sickmann A."/>
        </authorList>
    </citation>
    <scope>IDENTIFICATION BY MASS SPECTROMETRY [LARGE SCALE ANALYSIS]</scope>
</reference>
<evidence type="ECO:0000255" key="1"/>
<evidence type="ECO:0000255" key="2">
    <source>
        <dbReference type="PROSITE-ProRule" id="PRU00541"/>
    </source>
</evidence>
<evidence type="ECO:0000255" key="3">
    <source>
        <dbReference type="PROSITE-ProRule" id="PRU00542"/>
    </source>
</evidence>
<evidence type="ECO:0000256" key="4">
    <source>
        <dbReference type="SAM" id="MobiDB-lite"/>
    </source>
</evidence>
<evidence type="ECO:0000305" key="5"/>
<name>DDX41_DICDI</name>
<comment type="catalytic activity">
    <reaction>
        <text>ATP + H2O = ADP + phosphate + H(+)</text>
        <dbReference type="Rhea" id="RHEA:13065"/>
        <dbReference type="ChEBI" id="CHEBI:15377"/>
        <dbReference type="ChEBI" id="CHEBI:15378"/>
        <dbReference type="ChEBI" id="CHEBI:30616"/>
        <dbReference type="ChEBI" id="CHEBI:43474"/>
        <dbReference type="ChEBI" id="CHEBI:456216"/>
        <dbReference type="EC" id="3.6.4.13"/>
    </reaction>
</comment>
<comment type="subcellular location">
    <subcellularLocation>
        <location evidence="5">Nucleus</location>
    </subcellularLocation>
</comment>
<comment type="similarity">
    <text evidence="5">Belongs to the DEAD box helicase family. DDX41 subfamily.</text>
</comment>
<feature type="chain" id="PRO_0000328113" description="Probable ATP-dependent RNA helicase ddx41">
    <location>
        <begin position="1"/>
        <end position="671"/>
    </location>
</feature>
<feature type="domain" description="Helicase ATP-binding" evidence="2">
    <location>
        <begin position="253"/>
        <end position="438"/>
    </location>
</feature>
<feature type="domain" description="Helicase C-terminal" evidence="3">
    <location>
        <begin position="449"/>
        <end position="609"/>
    </location>
</feature>
<feature type="zinc finger region" description="CCHC-type">
    <location>
        <begin position="635"/>
        <end position="652"/>
    </location>
</feature>
<feature type="region of interest" description="Disordered" evidence="4">
    <location>
        <begin position="33"/>
        <end position="88"/>
    </location>
</feature>
<feature type="region of interest" description="Disordered" evidence="4">
    <location>
        <begin position="125"/>
        <end position="148"/>
    </location>
</feature>
<feature type="region of interest" description="Disordered" evidence="4">
    <location>
        <begin position="617"/>
        <end position="636"/>
    </location>
</feature>
<feature type="coiled-coil region" evidence="1">
    <location>
        <begin position="19"/>
        <end position="43"/>
    </location>
</feature>
<feature type="coiled-coil region" evidence="1">
    <location>
        <begin position="100"/>
        <end position="154"/>
    </location>
</feature>
<feature type="short sequence motif" description="Q motif">
    <location>
        <begin position="222"/>
        <end position="250"/>
    </location>
</feature>
<feature type="short sequence motif" description="DEAD box">
    <location>
        <begin position="386"/>
        <end position="389"/>
    </location>
</feature>
<feature type="compositionally biased region" description="Low complexity" evidence="4">
    <location>
        <begin position="33"/>
        <end position="83"/>
    </location>
</feature>
<feature type="compositionally biased region" description="Low complexity" evidence="4">
    <location>
        <begin position="125"/>
        <end position="139"/>
    </location>
</feature>
<feature type="binding site" evidence="2">
    <location>
        <begin position="266"/>
        <end position="273"/>
    </location>
    <ligand>
        <name>ATP</name>
        <dbReference type="ChEBI" id="CHEBI:30616"/>
    </ligand>
</feature>
<protein>
    <recommendedName>
        <fullName>Probable ATP-dependent RNA helicase ddx41</fullName>
        <ecNumber>3.6.4.13</ecNumber>
    </recommendedName>
    <alternativeName>
        <fullName>DEAD box protein 41</fullName>
    </alternativeName>
</protein>
<gene>
    <name type="primary">ddx41</name>
    <name type="ORF">DDB_G0287361</name>
</gene>
<organism>
    <name type="scientific">Dictyostelium discoideum</name>
    <name type="common">Social amoeba</name>
    <dbReference type="NCBI Taxonomy" id="44689"/>
    <lineage>
        <taxon>Eukaryota</taxon>
        <taxon>Amoebozoa</taxon>
        <taxon>Evosea</taxon>
        <taxon>Eumycetozoa</taxon>
        <taxon>Dictyostelia</taxon>
        <taxon>Dictyosteliales</taxon>
        <taxon>Dictyosteliaceae</taxon>
        <taxon>Dictyostelium</taxon>
    </lineage>
</organism>
<proteinExistence type="evidence at protein level"/>